<accession>Q2KIV9</accession>
<gene>
    <name type="primary">C1QB</name>
</gene>
<evidence type="ECO:0000250" key="1">
    <source>
        <dbReference type="UniProtKB" id="P02746"/>
    </source>
</evidence>
<evidence type="ECO:0000255" key="2"/>
<evidence type="ECO:0000255" key="3">
    <source>
        <dbReference type="PROSITE-ProRule" id="PRU00368"/>
    </source>
</evidence>
<evidence type="ECO:0000256" key="4">
    <source>
        <dbReference type="SAM" id="MobiDB-lite"/>
    </source>
</evidence>
<evidence type="ECO:0000269" key="5">
    <source>
    </source>
</evidence>
<organism>
    <name type="scientific">Bos taurus</name>
    <name type="common">Bovine</name>
    <dbReference type="NCBI Taxonomy" id="9913"/>
    <lineage>
        <taxon>Eukaryota</taxon>
        <taxon>Metazoa</taxon>
        <taxon>Chordata</taxon>
        <taxon>Craniata</taxon>
        <taxon>Vertebrata</taxon>
        <taxon>Euteleostomi</taxon>
        <taxon>Mammalia</taxon>
        <taxon>Eutheria</taxon>
        <taxon>Laurasiatheria</taxon>
        <taxon>Artiodactyla</taxon>
        <taxon>Ruminantia</taxon>
        <taxon>Pecora</taxon>
        <taxon>Bovidae</taxon>
        <taxon>Bovinae</taxon>
        <taxon>Bos</taxon>
    </lineage>
</organism>
<comment type="function">
    <text evidence="1">Core component of the complement C1 complex, a multiprotein complex that initiates the classical pathway of the complement system, a cascade of proteins that leads to phagocytosis and breakdown of pathogens and signaling that strengthens the adaptive immune system. The classical complement pathway is initiated by the C1Q subcomplex of the C1 complex, which specifically binds IgG or IgM immunoglobulins complexed with antigens, forming antigen-antibody complexes on the surface of pathogens: C1QA, together with C1QB and C1QC, specifically recognizes and binds the Fc regions of IgG or IgM via its C1q domain. Immunoglobulin-binding activates the proenzyme C1R, which cleaves C1S, initiating the proteolytic cascade of the complement system. The C1Q subcomplex is activated by a hexamer of IgG complexed with antigens, while it is activated by a pentameric IgM. The C1Q subcomplex also recognizes and binds phosphatidylserine exposed on the surface of cells undergoing programmed cell death, possibly promoting activation of the complement system.</text>
</comment>
<comment type="activity regulation">
    <text evidence="1">The C1Q subcomplex is inhibited by sulfated molecules, such as triterpenoid sulfates, heparan sulfate, or chondroitin sulfates.</text>
</comment>
<comment type="subunit">
    <text evidence="1">Core component of the complement C1 complex, a calcium-dependent complex composed of 1 molecule of the C1Q subcomplex, 2 molecules of C1R and 2 molecules of C1S. The C1Q subcomplex is composed 18 subunits: 3 chains of C1QA, C1QB, and C1QC trimerize to form 6 collagen-like triple helices connected to six globular ligand-recognition modules (C1q domain).</text>
</comment>
<comment type="subcellular location">
    <subcellularLocation>
        <location evidence="1">Secreted</location>
    </subcellularLocation>
    <subcellularLocation>
        <location evidence="1">Cell surface</location>
    </subcellularLocation>
    <text evidence="1">Specifically binds IgG or IgM immunoglobulins complexed with antigens, forming antigen-antibody complexes on the surface of pathogens.</text>
</comment>
<comment type="domain">
    <text evidence="1">The C1q domain is the ligand-recognition domain, which specifically recognizes and binds the Fc regions of IgG or IgM immunoglobulins.</text>
</comment>
<comment type="domain">
    <text evidence="1">The collagen-like domain interacts with C1R and C1S proenzymes.</text>
</comment>
<comment type="PTM">
    <text evidence="5">Hydroxylated on lysine and proline residues. Hydroxylated lysine residues can be glycosylated. Bovine C1Q contains up to 66.3 hydroxylysine-galactosylglucose residues. Total percentage hydroxylysine residues glycosylated is 92.0%. Contains no hydroxylysine-monosaccharides.</text>
</comment>
<feature type="signal peptide" evidence="2">
    <location>
        <begin position="1"/>
        <end position="22"/>
    </location>
</feature>
<feature type="chain" id="PRO_0000286135" description="Complement C1q subcomponent subunit B">
    <location>
        <begin position="23"/>
        <end position="247"/>
    </location>
</feature>
<feature type="domain" description="Collagen-like">
    <location>
        <begin position="39"/>
        <end position="98"/>
    </location>
</feature>
<feature type="domain" description="C1q" evidence="3">
    <location>
        <begin position="111"/>
        <end position="247"/>
    </location>
</feature>
<feature type="region of interest" description="Disordered" evidence="4">
    <location>
        <begin position="30"/>
        <end position="78"/>
    </location>
</feature>
<feature type="compositionally biased region" description="Low complexity" evidence="4">
    <location>
        <begin position="40"/>
        <end position="52"/>
    </location>
</feature>
<feature type="binding site" evidence="1">
    <location>
        <position position="193"/>
    </location>
    <ligand>
        <name>Ca(2+)</name>
        <dbReference type="ChEBI" id="CHEBI:29108"/>
    </ligand>
</feature>
<feature type="binding site" evidence="1">
    <location>
        <position position="194"/>
    </location>
    <ligand>
        <name>Ca(2+)</name>
        <dbReference type="ChEBI" id="CHEBI:29108"/>
    </ligand>
</feature>
<feature type="binding site" evidence="1">
    <location>
        <position position="200"/>
    </location>
    <ligand>
        <name>Ca(2+)</name>
        <dbReference type="ChEBI" id="CHEBI:29108"/>
    </ligand>
</feature>
<feature type="modified residue" description="Pyrrolidone carboxylic acid" evidence="1">
    <location>
        <position position="23"/>
    </location>
</feature>
<feature type="modified residue" description="4-hydroxyproline" evidence="1">
    <location>
        <position position="29"/>
    </location>
</feature>
<feature type="modified residue" description="4-hydroxyproline" evidence="1">
    <location>
        <position position="32"/>
    </location>
</feature>
<feature type="modified residue" description="4-hydroxyproline" evidence="1">
    <location>
        <position position="35"/>
    </location>
</feature>
<feature type="modified residue" description="4-hydroxyproline" evidence="1">
    <location>
        <position position="47"/>
    </location>
</feature>
<feature type="modified residue" description="4-hydroxyproline" evidence="1">
    <location>
        <position position="50"/>
    </location>
</feature>
<feature type="modified residue" description="5-hydroxylysine" evidence="1">
    <location>
        <position position="53"/>
    </location>
</feature>
<feature type="modified residue" description="5-hydroxylysine" evidence="1">
    <location>
        <position position="56"/>
    </location>
</feature>
<feature type="modified residue" description="4-hydroxyproline" evidence="1">
    <location>
        <position position="59"/>
    </location>
</feature>
<feature type="modified residue" description="5-hydroxylysine" evidence="1">
    <location>
        <position position="71"/>
    </location>
</feature>
<feature type="modified residue" description="4-hydroxyproline" evidence="1">
    <location>
        <position position="77"/>
    </location>
</feature>
<feature type="modified residue" description="4-hydroxyproline" evidence="1">
    <location>
        <position position="80"/>
    </location>
</feature>
<feature type="modified residue" description="5-hydroxylysine" evidence="1">
    <location>
        <position position="86"/>
    </location>
</feature>
<feature type="modified residue" description="5-hydroxylysine" evidence="1">
    <location>
        <position position="92"/>
    </location>
</feature>
<feature type="modified residue" description="4-hydroxyproline" evidence="1">
    <location>
        <position position="95"/>
    </location>
</feature>
<feature type="modified residue" description="4-hydroxyproline" evidence="1">
    <location>
        <position position="98"/>
    </location>
</feature>
<feature type="modified residue" description="5-hydroxylysine" evidence="1">
    <location>
        <position position="104"/>
    </location>
</feature>
<feature type="disulfide bond" description="Interchain (with C-26 in chain A)" evidence="1">
    <location>
        <position position="26"/>
    </location>
</feature>
<feature type="disulfide bond" evidence="1">
    <location>
        <begin position="175"/>
        <end position="192"/>
    </location>
</feature>
<reference key="1">
    <citation type="submission" date="2006-01" db="EMBL/GenBank/DDBJ databases">
        <authorList>
            <consortium name="NIH - Mammalian Gene Collection (MGC) project"/>
        </authorList>
    </citation>
    <scope>NUCLEOTIDE SEQUENCE [LARGE SCALE MRNA]</scope>
    <source>
        <strain>Hereford</strain>
        <tissue>Testis</tissue>
    </source>
</reference>
<reference key="2">
    <citation type="journal article" date="1981" name="Coll. Relat. Res.">
        <title>Comparable content of hydroxylysine-linked glycosides in subcomponents C1q of the first component of human, bovine and mouse complement.</title>
        <authorList>
            <person name="Yonemasu K."/>
            <person name="Shinkai H."/>
            <person name="Sasaki T."/>
        </authorList>
    </citation>
    <scope>GLYCOSYLATION ON HYDROXYLYSINES</scope>
</reference>
<protein>
    <recommendedName>
        <fullName>Complement C1q subcomponent subunit B</fullName>
    </recommendedName>
</protein>
<sequence>MKTPRGSVLVLLLLNLLRVSWAQSNCIRPSIPGIPGIPGKPGSDGKPGTPGTKGEKGLPGLVSHLNENGEKGDPGFPGMPGKVGPKGPIGPKGVPGPPGVRGPKGESGDYKATQKIAFSASRTINHHQRQGQPIRFDHVITNANENYQARSSKFTCKVPGLYFFTYHASSRGQLCVDLMRGRAEPQKVVTFCDYVQNTFQVTTGSIVLKLEKDETVFLQATEKNALVGIEGANSIFSGFMLFPDTEA</sequence>
<dbReference type="EMBL" id="BC112490">
    <property type="protein sequence ID" value="AAI12491.1"/>
    <property type="molecule type" value="mRNA"/>
</dbReference>
<dbReference type="RefSeq" id="NP_001040064.1">
    <property type="nucleotide sequence ID" value="NM_001046599.2"/>
</dbReference>
<dbReference type="RefSeq" id="XP_010800915.1">
    <property type="nucleotide sequence ID" value="XM_010802613.1"/>
</dbReference>
<dbReference type="SMR" id="Q2KIV9"/>
<dbReference type="BioGRID" id="545030">
    <property type="interactions" value="1"/>
</dbReference>
<dbReference type="FunCoup" id="Q2KIV9">
    <property type="interactions" value="126"/>
</dbReference>
<dbReference type="STRING" id="9913.ENSBTAP00000014871"/>
<dbReference type="PaxDb" id="9913-ENSBTAP00000014871"/>
<dbReference type="Ensembl" id="ENSBTAT00000014871.5">
    <property type="protein sequence ID" value="ENSBTAP00000014871.3"/>
    <property type="gene ID" value="ENSBTAG00000011196.5"/>
</dbReference>
<dbReference type="GeneID" id="617435"/>
<dbReference type="KEGG" id="bta:617435"/>
<dbReference type="CTD" id="713"/>
<dbReference type="VEuPathDB" id="HostDB:ENSBTAG00000011196"/>
<dbReference type="VGNC" id="VGNC:26617">
    <property type="gene designation" value="C1QB"/>
</dbReference>
<dbReference type="eggNOG" id="ENOG502RYR2">
    <property type="taxonomic scope" value="Eukaryota"/>
</dbReference>
<dbReference type="GeneTree" id="ENSGT00940000161091"/>
<dbReference type="HOGENOM" id="CLU_001074_0_2_1"/>
<dbReference type="InParanoid" id="Q2KIV9"/>
<dbReference type="OMA" id="WAMLICL"/>
<dbReference type="OrthoDB" id="8964326at2759"/>
<dbReference type="TreeFam" id="TF329591"/>
<dbReference type="Reactome" id="R-BTA-166663">
    <property type="pathway name" value="Initial triggering of complement"/>
</dbReference>
<dbReference type="Reactome" id="R-BTA-173623">
    <property type="pathway name" value="Classical antibody-mediated complement activation"/>
</dbReference>
<dbReference type="Reactome" id="R-BTA-977606">
    <property type="pathway name" value="Regulation of Complement cascade"/>
</dbReference>
<dbReference type="Proteomes" id="UP000009136">
    <property type="component" value="Chromosome 2"/>
</dbReference>
<dbReference type="Bgee" id="ENSBTAG00000011196">
    <property type="expression patterns" value="Expressed in lung and 107 other cell types or tissues"/>
</dbReference>
<dbReference type="GO" id="GO:0005581">
    <property type="term" value="C:collagen trimer"/>
    <property type="evidence" value="ECO:0007669"/>
    <property type="project" value="UniProtKB-KW"/>
</dbReference>
<dbReference type="GO" id="GO:0005576">
    <property type="term" value="C:extracellular region"/>
    <property type="evidence" value="ECO:0007669"/>
    <property type="project" value="UniProtKB-SubCell"/>
</dbReference>
<dbReference type="GO" id="GO:0098890">
    <property type="term" value="C:extrinsic component of postsynaptic membrane"/>
    <property type="evidence" value="ECO:0007669"/>
    <property type="project" value="Ensembl"/>
</dbReference>
<dbReference type="GO" id="GO:0098888">
    <property type="term" value="C:extrinsic component of presynaptic membrane"/>
    <property type="evidence" value="ECO:0007669"/>
    <property type="project" value="Ensembl"/>
</dbReference>
<dbReference type="GO" id="GO:0098978">
    <property type="term" value="C:glutamatergic synapse"/>
    <property type="evidence" value="ECO:0007669"/>
    <property type="project" value="Ensembl"/>
</dbReference>
<dbReference type="GO" id="GO:0042802">
    <property type="term" value="F:identical protein binding"/>
    <property type="evidence" value="ECO:0007669"/>
    <property type="project" value="Ensembl"/>
</dbReference>
<dbReference type="GO" id="GO:0006958">
    <property type="term" value="P:complement activation, classical pathway"/>
    <property type="evidence" value="ECO:0007669"/>
    <property type="project" value="UniProtKB-KW"/>
</dbReference>
<dbReference type="GO" id="GO:0045087">
    <property type="term" value="P:innate immune response"/>
    <property type="evidence" value="ECO:0007669"/>
    <property type="project" value="UniProtKB-KW"/>
</dbReference>
<dbReference type="GO" id="GO:0048839">
    <property type="term" value="P:inner ear development"/>
    <property type="evidence" value="ECO:0007669"/>
    <property type="project" value="Ensembl"/>
</dbReference>
<dbReference type="GO" id="GO:0098883">
    <property type="term" value="P:synapse pruning"/>
    <property type="evidence" value="ECO:0007669"/>
    <property type="project" value="Ensembl"/>
</dbReference>
<dbReference type="FunFam" id="2.60.120.40:FF:000001">
    <property type="entry name" value="Complement C1q B chain"/>
    <property type="match status" value="1"/>
</dbReference>
<dbReference type="Gene3D" id="2.60.120.40">
    <property type="match status" value="1"/>
</dbReference>
<dbReference type="InterPro" id="IPR001073">
    <property type="entry name" value="C1q_dom"/>
</dbReference>
<dbReference type="InterPro" id="IPR008160">
    <property type="entry name" value="Collagen"/>
</dbReference>
<dbReference type="InterPro" id="IPR050392">
    <property type="entry name" value="Collagen/C1q_domain"/>
</dbReference>
<dbReference type="InterPro" id="IPR008983">
    <property type="entry name" value="Tumour_necrosis_fac-like_dom"/>
</dbReference>
<dbReference type="PANTHER" id="PTHR15427:SF18">
    <property type="entry name" value="COMPLEMENT C1Q SUBCOMPONENT SUBUNIT B"/>
    <property type="match status" value="1"/>
</dbReference>
<dbReference type="PANTHER" id="PTHR15427">
    <property type="entry name" value="EMILIN ELASTIN MICROFIBRIL INTERFACE-LOCATED PROTEIN ELASTIN MICROFIBRIL INTERFACER"/>
    <property type="match status" value="1"/>
</dbReference>
<dbReference type="Pfam" id="PF00386">
    <property type="entry name" value="C1q"/>
    <property type="match status" value="1"/>
</dbReference>
<dbReference type="Pfam" id="PF01391">
    <property type="entry name" value="Collagen"/>
    <property type="match status" value="1"/>
</dbReference>
<dbReference type="PRINTS" id="PR00007">
    <property type="entry name" value="COMPLEMNTC1Q"/>
</dbReference>
<dbReference type="SMART" id="SM00110">
    <property type="entry name" value="C1Q"/>
    <property type="match status" value="1"/>
</dbReference>
<dbReference type="SUPFAM" id="SSF49842">
    <property type="entry name" value="TNF-like"/>
    <property type="match status" value="1"/>
</dbReference>
<dbReference type="PROSITE" id="PS50871">
    <property type="entry name" value="C1Q"/>
    <property type="match status" value="1"/>
</dbReference>
<name>C1QB_BOVIN</name>
<proteinExistence type="evidence at protein level"/>
<keyword id="KW-0106">Calcium</keyword>
<keyword id="KW-0176">Collagen</keyword>
<keyword id="KW-0180">Complement pathway</keyword>
<keyword id="KW-1015">Disulfide bond</keyword>
<keyword id="KW-0325">Glycoprotein</keyword>
<keyword id="KW-0379">Hydroxylation</keyword>
<keyword id="KW-0391">Immunity</keyword>
<keyword id="KW-0399">Innate immunity</keyword>
<keyword id="KW-0479">Metal-binding</keyword>
<keyword id="KW-0873">Pyrrolidone carboxylic acid</keyword>
<keyword id="KW-1185">Reference proteome</keyword>
<keyword id="KW-0677">Repeat</keyword>
<keyword id="KW-0964">Secreted</keyword>
<keyword id="KW-0732">Signal</keyword>